<gene>
    <name evidence="1" type="primary">trpS2</name>
    <name type="synonym">trpS</name>
    <name type="ordered locus">VNG_2232G</name>
</gene>
<keyword id="KW-0030">Aminoacyl-tRNA synthetase</keyword>
<keyword id="KW-0067">ATP-binding</keyword>
<keyword id="KW-0963">Cytoplasm</keyword>
<keyword id="KW-0436">Ligase</keyword>
<keyword id="KW-0547">Nucleotide-binding</keyword>
<keyword id="KW-0648">Protein biosynthesis</keyword>
<keyword id="KW-1185">Reference proteome</keyword>
<protein>
    <recommendedName>
        <fullName evidence="1">Tryptophan--tRNA ligase 2</fullName>
        <ecNumber evidence="1">6.1.1.2</ecNumber>
    </recommendedName>
    <alternativeName>
        <fullName evidence="1">Tryptophanyl-tRNA synthetase 2</fullName>
        <shortName evidence="1">TrpRS 2</shortName>
    </alternativeName>
</protein>
<comment type="catalytic activity">
    <reaction evidence="1">
        <text>tRNA(Trp) + L-tryptophan + ATP = L-tryptophyl-tRNA(Trp) + AMP + diphosphate + H(+)</text>
        <dbReference type="Rhea" id="RHEA:24080"/>
        <dbReference type="Rhea" id="RHEA-COMP:9671"/>
        <dbReference type="Rhea" id="RHEA-COMP:9705"/>
        <dbReference type="ChEBI" id="CHEBI:15378"/>
        <dbReference type="ChEBI" id="CHEBI:30616"/>
        <dbReference type="ChEBI" id="CHEBI:33019"/>
        <dbReference type="ChEBI" id="CHEBI:57912"/>
        <dbReference type="ChEBI" id="CHEBI:78442"/>
        <dbReference type="ChEBI" id="CHEBI:78535"/>
        <dbReference type="ChEBI" id="CHEBI:456215"/>
        <dbReference type="EC" id="6.1.1.2"/>
    </reaction>
</comment>
<comment type="subcellular location">
    <subcellularLocation>
        <location evidence="1">Cytoplasm</location>
    </subcellularLocation>
</comment>
<comment type="similarity">
    <text evidence="1">Belongs to the class-I aminoacyl-tRNA synthetase family.</text>
</comment>
<feature type="chain" id="PRO_0000136721" description="Tryptophan--tRNA ligase 2">
    <location>
        <begin position="1"/>
        <end position="380"/>
    </location>
</feature>
<feature type="short sequence motif" description="'HIGH' region">
    <location>
        <begin position="74"/>
        <end position="82"/>
    </location>
</feature>
<feature type="short sequence motif" description="'KMSKS' region">
    <location>
        <begin position="249"/>
        <end position="253"/>
    </location>
</feature>
<reference key="1">
    <citation type="journal article" date="2000" name="Proc. Natl. Acad. Sci. U.S.A.">
        <title>Genome sequence of Halobacterium species NRC-1.</title>
        <authorList>
            <person name="Ng W.V."/>
            <person name="Kennedy S.P."/>
            <person name="Mahairas G.G."/>
            <person name="Berquist B."/>
            <person name="Pan M."/>
            <person name="Shukla H.D."/>
            <person name="Lasky S.R."/>
            <person name="Baliga N.S."/>
            <person name="Thorsson V."/>
            <person name="Sbrogna J."/>
            <person name="Swartzell S."/>
            <person name="Weir D."/>
            <person name="Hall J."/>
            <person name="Dahl T.A."/>
            <person name="Welti R."/>
            <person name="Goo Y.A."/>
            <person name="Leithauser B."/>
            <person name="Keller K."/>
            <person name="Cruz R."/>
            <person name="Danson M.J."/>
            <person name="Hough D.W."/>
            <person name="Maddocks D.G."/>
            <person name="Jablonski P.E."/>
            <person name="Krebs M.P."/>
            <person name="Angevine C.M."/>
            <person name="Dale H."/>
            <person name="Isenbarger T.A."/>
            <person name="Peck R.F."/>
            <person name="Pohlschroder M."/>
            <person name="Spudich J.L."/>
            <person name="Jung K.-H."/>
            <person name="Alam M."/>
            <person name="Freitas T."/>
            <person name="Hou S."/>
            <person name="Daniels C.J."/>
            <person name="Dennis P.P."/>
            <person name="Omer A.D."/>
            <person name="Ebhardt H."/>
            <person name="Lowe T.M."/>
            <person name="Liang P."/>
            <person name="Riley M."/>
            <person name="Hood L."/>
            <person name="DasSarma S."/>
        </authorList>
    </citation>
    <scope>NUCLEOTIDE SEQUENCE [LARGE SCALE GENOMIC DNA]</scope>
    <source>
        <strain>ATCC 700922 / JCM 11081 / NRC-1</strain>
    </source>
</reference>
<dbReference type="EC" id="6.1.1.2" evidence="1"/>
<dbReference type="EMBL" id="AE004437">
    <property type="protein sequence ID" value="AAG20355.1"/>
    <property type="molecule type" value="Genomic_DNA"/>
</dbReference>
<dbReference type="PIR" id="G84373">
    <property type="entry name" value="G84373"/>
</dbReference>
<dbReference type="RefSeq" id="WP_010903656.1">
    <property type="nucleotide sequence ID" value="NC_002607.1"/>
</dbReference>
<dbReference type="SMR" id="Q9HN66"/>
<dbReference type="STRING" id="64091.VNG_2232G"/>
<dbReference type="PaxDb" id="64091-VNG_2232G"/>
<dbReference type="KEGG" id="hal:VNG_2232G"/>
<dbReference type="PATRIC" id="fig|64091.14.peg.1715"/>
<dbReference type="HOGENOM" id="CLU_032621_0_1_2"/>
<dbReference type="InParanoid" id="Q9HN66"/>
<dbReference type="OrthoDB" id="371821at2157"/>
<dbReference type="PhylomeDB" id="Q9HN66"/>
<dbReference type="Proteomes" id="UP000000554">
    <property type="component" value="Chromosome"/>
</dbReference>
<dbReference type="GO" id="GO:0005737">
    <property type="term" value="C:cytoplasm"/>
    <property type="evidence" value="ECO:0000318"/>
    <property type="project" value="GO_Central"/>
</dbReference>
<dbReference type="GO" id="GO:0005524">
    <property type="term" value="F:ATP binding"/>
    <property type="evidence" value="ECO:0007669"/>
    <property type="project" value="UniProtKB-UniRule"/>
</dbReference>
<dbReference type="GO" id="GO:0004830">
    <property type="term" value="F:tryptophan-tRNA ligase activity"/>
    <property type="evidence" value="ECO:0000318"/>
    <property type="project" value="GO_Central"/>
</dbReference>
<dbReference type="GO" id="GO:0006436">
    <property type="term" value="P:tryptophanyl-tRNA aminoacylation"/>
    <property type="evidence" value="ECO:0000318"/>
    <property type="project" value="GO_Central"/>
</dbReference>
<dbReference type="CDD" id="cd00806">
    <property type="entry name" value="TrpRS_core"/>
    <property type="match status" value="1"/>
</dbReference>
<dbReference type="FunFam" id="1.10.240.10:FF:000007">
    <property type="entry name" value="Tryptophan--tRNA ligase"/>
    <property type="match status" value="1"/>
</dbReference>
<dbReference type="FunFam" id="3.40.50.620:FF:000207">
    <property type="entry name" value="Tryptophan--tRNA ligase"/>
    <property type="match status" value="1"/>
</dbReference>
<dbReference type="Gene3D" id="3.40.50.620">
    <property type="entry name" value="HUPs"/>
    <property type="match status" value="1"/>
</dbReference>
<dbReference type="Gene3D" id="1.10.240.10">
    <property type="entry name" value="Tyrosyl-Transfer RNA Synthetase"/>
    <property type="match status" value="1"/>
</dbReference>
<dbReference type="HAMAP" id="MF_00140_A">
    <property type="entry name" value="Trp_tRNA_synth_A"/>
    <property type="match status" value="1"/>
</dbReference>
<dbReference type="InterPro" id="IPR001412">
    <property type="entry name" value="aa-tRNA-synth_I_CS"/>
</dbReference>
<dbReference type="InterPro" id="IPR002305">
    <property type="entry name" value="aa-tRNA-synth_Ic"/>
</dbReference>
<dbReference type="InterPro" id="IPR014729">
    <property type="entry name" value="Rossmann-like_a/b/a_fold"/>
</dbReference>
<dbReference type="InterPro" id="IPR002306">
    <property type="entry name" value="Trp-tRNA-ligase"/>
</dbReference>
<dbReference type="InterPro" id="IPR020653">
    <property type="entry name" value="Tryptophan-tRNA-ligase_arc"/>
</dbReference>
<dbReference type="NCBIfam" id="NF008927">
    <property type="entry name" value="PRK12285.1-4"/>
    <property type="match status" value="1"/>
</dbReference>
<dbReference type="NCBIfam" id="TIGR00233">
    <property type="entry name" value="trpS"/>
    <property type="match status" value="1"/>
</dbReference>
<dbReference type="PANTHER" id="PTHR10055:SF1">
    <property type="entry name" value="TRYPTOPHAN--TRNA LIGASE, CYTOPLASMIC"/>
    <property type="match status" value="1"/>
</dbReference>
<dbReference type="PANTHER" id="PTHR10055">
    <property type="entry name" value="TRYPTOPHANYL-TRNA SYNTHETASE"/>
    <property type="match status" value="1"/>
</dbReference>
<dbReference type="Pfam" id="PF00579">
    <property type="entry name" value="tRNA-synt_1b"/>
    <property type="match status" value="1"/>
</dbReference>
<dbReference type="PRINTS" id="PR01039">
    <property type="entry name" value="TRNASYNTHTRP"/>
</dbReference>
<dbReference type="SUPFAM" id="SSF52374">
    <property type="entry name" value="Nucleotidylyl transferase"/>
    <property type="match status" value="1"/>
</dbReference>
<dbReference type="PROSITE" id="PS00178">
    <property type="entry name" value="AA_TRNA_LIGASE_I"/>
    <property type="match status" value="1"/>
</dbReference>
<sequence length="380" mass="41937">MTADGNDVTPYAVESDDLDYEKLLARFGADELTDDQRARFPDHPLVNRGLFYAGRDVDDFLTAGEQSIVTGVGPSGPMHLGHAMVFYFARRLQDEFGARVYVPLSDDEKYWFKDQTPAETGDYLRANLRDLLAVGFDPELTRIVVDTRDADVLYPLATAFAGDVRHATLQNVYGEPDNVGQAFYPAVQTAHLLLPQLVHGEHETLVPIAVDQDPHVRVSRDVAAKARYPVGKPGALLMQFLPSLAGPGKMSSSAGVSIRLTDSPDTVREKVRTHAYTGGRASVEEHRAKGGVPAEDVPFQYLSAFFEPDDAELARIEREYRAGDLLSGELKDLAADRITEFLAAHQRRRAALGDVTEALDAFRLTDDERQRARDAVGFGY</sequence>
<name>SYW2_HALSA</name>
<evidence type="ECO:0000255" key="1">
    <source>
        <dbReference type="HAMAP-Rule" id="MF_00140"/>
    </source>
</evidence>
<proteinExistence type="inferred from homology"/>
<accession>Q9HN66</accession>
<organism>
    <name type="scientific">Halobacterium salinarum (strain ATCC 700922 / JCM 11081 / NRC-1)</name>
    <name type="common">Halobacterium halobium</name>
    <dbReference type="NCBI Taxonomy" id="64091"/>
    <lineage>
        <taxon>Archaea</taxon>
        <taxon>Methanobacteriati</taxon>
        <taxon>Methanobacteriota</taxon>
        <taxon>Stenosarchaea group</taxon>
        <taxon>Halobacteria</taxon>
        <taxon>Halobacteriales</taxon>
        <taxon>Halobacteriaceae</taxon>
        <taxon>Halobacterium</taxon>
        <taxon>Halobacterium salinarum NRC-34001</taxon>
    </lineage>
</organism>